<proteinExistence type="inferred from homology"/>
<reference key="1">
    <citation type="journal article" date="2003" name="Nature">
        <title>Genome sequence of Bacillus cereus and comparative analysis with Bacillus anthracis.</title>
        <authorList>
            <person name="Ivanova N."/>
            <person name="Sorokin A."/>
            <person name="Anderson I."/>
            <person name="Galleron N."/>
            <person name="Candelon B."/>
            <person name="Kapatral V."/>
            <person name="Bhattacharyya A."/>
            <person name="Reznik G."/>
            <person name="Mikhailova N."/>
            <person name="Lapidus A."/>
            <person name="Chu L."/>
            <person name="Mazur M."/>
            <person name="Goltsman E."/>
            <person name="Larsen N."/>
            <person name="D'Souza M."/>
            <person name="Walunas T."/>
            <person name="Grechkin Y."/>
            <person name="Pusch G."/>
            <person name="Haselkorn R."/>
            <person name="Fonstein M."/>
            <person name="Ehrlich S.D."/>
            <person name="Overbeek R."/>
            <person name="Kyrpides N.C."/>
        </authorList>
    </citation>
    <scope>NUCLEOTIDE SEQUENCE [LARGE SCALE GENOMIC DNA]</scope>
    <source>
        <strain>ATCC 14579 / DSM 31 / CCUG 7414 / JCM 2152 / NBRC 15305 / NCIMB 9373 / NCTC 2599 / NRRL B-3711</strain>
    </source>
</reference>
<comment type="subcellular location">
    <subcellularLocation>
        <location evidence="1">Spore core</location>
    </subcellularLocation>
</comment>
<comment type="induction">
    <text evidence="1">Expressed only in the forespore compartment of sporulating cells.</text>
</comment>
<comment type="similarity">
    <text evidence="1">Belongs to the SspI family.</text>
</comment>
<gene>
    <name evidence="1" type="primary">sspI</name>
    <name type="ordered locus">BC_4563</name>
</gene>
<sequence length="69" mass="7673">MSFNLRGAVLANVSGNSQDQLQETIVDAIQSGEEKMLPGLGVLFEVIWKNADENEKHEMLETLEQGLKK</sequence>
<name>SSPI_BACCR</name>
<dbReference type="EMBL" id="AE016877">
    <property type="protein sequence ID" value="AAP11470.1"/>
    <property type="molecule type" value="Genomic_DNA"/>
</dbReference>
<dbReference type="RefSeq" id="NP_834269.1">
    <property type="nucleotide sequence ID" value="NC_004722.1"/>
</dbReference>
<dbReference type="RefSeq" id="WP_000009509.1">
    <property type="nucleotide sequence ID" value="NZ_CP138336.1"/>
</dbReference>
<dbReference type="SMR" id="Q817I4"/>
<dbReference type="STRING" id="226900.BC_4563"/>
<dbReference type="GeneID" id="92798850"/>
<dbReference type="KEGG" id="bce:BC4563"/>
<dbReference type="PATRIC" id="fig|226900.8.peg.4723"/>
<dbReference type="HOGENOM" id="CLU_188877_0_0_9"/>
<dbReference type="OrthoDB" id="2453696at2"/>
<dbReference type="PRO" id="PR:Q817I4"/>
<dbReference type="Proteomes" id="UP000001417">
    <property type="component" value="Chromosome"/>
</dbReference>
<dbReference type="GO" id="GO:0030436">
    <property type="term" value="P:asexual sporulation"/>
    <property type="evidence" value="ECO:0007669"/>
    <property type="project" value="UniProtKB-UniRule"/>
</dbReference>
<dbReference type="GO" id="GO:0030435">
    <property type="term" value="P:sporulation resulting in formation of a cellular spore"/>
    <property type="evidence" value="ECO:0007669"/>
    <property type="project" value="UniProtKB-KW"/>
</dbReference>
<dbReference type="HAMAP" id="MF_00669">
    <property type="entry name" value="SspI"/>
    <property type="match status" value="1"/>
</dbReference>
<dbReference type="InterPro" id="IPR017525">
    <property type="entry name" value="SspI"/>
</dbReference>
<dbReference type="NCBIfam" id="TIGR03092">
    <property type="entry name" value="SASP_sspI"/>
    <property type="match status" value="1"/>
</dbReference>
<dbReference type="Pfam" id="PF14098">
    <property type="entry name" value="SSPI"/>
    <property type="match status" value="1"/>
</dbReference>
<protein>
    <recommendedName>
        <fullName evidence="1">Small, acid-soluble spore protein I</fullName>
        <shortName evidence="1">SASP I</shortName>
    </recommendedName>
</protein>
<evidence type="ECO:0000255" key="1">
    <source>
        <dbReference type="HAMAP-Rule" id="MF_00669"/>
    </source>
</evidence>
<organism>
    <name type="scientific">Bacillus cereus (strain ATCC 14579 / DSM 31 / CCUG 7414 / JCM 2152 / NBRC 15305 / NCIMB 9373 / NCTC 2599 / NRRL B-3711)</name>
    <dbReference type="NCBI Taxonomy" id="226900"/>
    <lineage>
        <taxon>Bacteria</taxon>
        <taxon>Bacillati</taxon>
        <taxon>Bacillota</taxon>
        <taxon>Bacilli</taxon>
        <taxon>Bacillales</taxon>
        <taxon>Bacillaceae</taxon>
        <taxon>Bacillus</taxon>
        <taxon>Bacillus cereus group</taxon>
    </lineage>
</organism>
<keyword id="KW-1185">Reference proteome</keyword>
<keyword id="KW-0749">Sporulation</keyword>
<accession>Q817I4</accession>
<feature type="chain" id="PRO_0000218329" description="Small, acid-soluble spore protein I">
    <location>
        <begin position="1"/>
        <end position="69"/>
    </location>
</feature>